<sequence length="360" mass="40554">MKTSMQRKLDQLSVRLAELNDLLSRENVTADLDQYRKLTREHAELGPVVEQYALWRQSRNDEAAAQELLADASMRDFAEEAIRSARERMTRLEGELQKMLLPKDPNDDRNIFLEIRAGTGGDESALFAGDLLRMYLRYAERQRWQVEMMSESPSDLGGYKEVIVRIAGQGAYSRLKFESGGHRVQRVPATETQGRIHTSACTVAVMPEADEIGEVEINPADLRIDTFRASGAGGQHINKTDSAVRVTHIPTGIVVECQDDRSQHKNKDRALKVLAARIKDKQYHEQHAKEAATRKSLIGSGDRSERIRTYNFPQGRMTDHRINLTLYRLEALMDGDLDELIGALVSEHQAELLASLGDAD</sequence>
<keyword id="KW-0963">Cytoplasm</keyword>
<keyword id="KW-0488">Methylation</keyword>
<keyword id="KW-0648">Protein biosynthesis</keyword>
<protein>
    <recommendedName>
        <fullName evidence="1">Peptide chain release factor 1</fullName>
        <shortName evidence="1">RF-1</shortName>
    </recommendedName>
</protein>
<proteinExistence type="inferred from homology"/>
<reference key="1">
    <citation type="submission" date="2007-03" db="EMBL/GenBank/DDBJ databases">
        <title>Complete sequence of chromosome 1 of Burkholderia vietnamiensis G4.</title>
        <authorList>
            <consortium name="US DOE Joint Genome Institute"/>
            <person name="Copeland A."/>
            <person name="Lucas S."/>
            <person name="Lapidus A."/>
            <person name="Barry K."/>
            <person name="Detter J.C."/>
            <person name="Glavina del Rio T."/>
            <person name="Hammon N."/>
            <person name="Israni S."/>
            <person name="Dalin E."/>
            <person name="Tice H."/>
            <person name="Pitluck S."/>
            <person name="Chain P."/>
            <person name="Malfatti S."/>
            <person name="Shin M."/>
            <person name="Vergez L."/>
            <person name="Schmutz J."/>
            <person name="Larimer F."/>
            <person name="Land M."/>
            <person name="Hauser L."/>
            <person name="Kyrpides N."/>
            <person name="Tiedje J."/>
            <person name="Richardson P."/>
        </authorList>
    </citation>
    <scope>NUCLEOTIDE SEQUENCE [LARGE SCALE GENOMIC DNA]</scope>
    <source>
        <strain>G4 / LMG 22486</strain>
    </source>
</reference>
<accession>A4JB50</accession>
<feature type="chain" id="PRO_1000004869" description="Peptide chain release factor 1">
    <location>
        <begin position="1"/>
        <end position="360"/>
    </location>
</feature>
<feature type="modified residue" description="N5-methylglutamine" evidence="1">
    <location>
        <position position="235"/>
    </location>
</feature>
<name>RF1_BURVG</name>
<organism>
    <name type="scientific">Burkholderia vietnamiensis (strain G4 / LMG 22486)</name>
    <name type="common">Burkholderia cepacia (strain R1808)</name>
    <dbReference type="NCBI Taxonomy" id="269482"/>
    <lineage>
        <taxon>Bacteria</taxon>
        <taxon>Pseudomonadati</taxon>
        <taxon>Pseudomonadota</taxon>
        <taxon>Betaproteobacteria</taxon>
        <taxon>Burkholderiales</taxon>
        <taxon>Burkholderiaceae</taxon>
        <taxon>Burkholderia</taxon>
        <taxon>Burkholderia cepacia complex</taxon>
    </lineage>
</organism>
<evidence type="ECO:0000255" key="1">
    <source>
        <dbReference type="HAMAP-Rule" id="MF_00093"/>
    </source>
</evidence>
<gene>
    <name evidence="1" type="primary">prfA</name>
    <name type="ordered locus">Bcep1808_0491</name>
</gene>
<dbReference type="EMBL" id="CP000614">
    <property type="protein sequence ID" value="ABO53503.1"/>
    <property type="molecule type" value="Genomic_DNA"/>
</dbReference>
<dbReference type="SMR" id="A4JB50"/>
<dbReference type="KEGG" id="bvi:Bcep1808_0491"/>
<dbReference type="eggNOG" id="COG0216">
    <property type="taxonomic scope" value="Bacteria"/>
</dbReference>
<dbReference type="HOGENOM" id="CLU_036856_0_1_4"/>
<dbReference type="Proteomes" id="UP000002287">
    <property type="component" value="Chromosome 1"/>
</dbReference>
<dbReference type="GO" id="GO:0005737">
    <property type="term" value="C:cytoplasm"/>
    <property type="evidence" value="ECO:0007669"/>
    <property type="project" value="UniProtKB-SubCell"/>
</dbReference>
<dbReference type="GO" id="GO:0016149">
    <property type="term" value="F:translation release factor activity, codon specific"/>
    <property type="evidence" value="ECO:0007669"/>
    <property type="project" value="UniProtKB-UniRule"/>
</dbReference>
<dbReference type="FunFam" id="3.30.160.20:FF:000004">
    <property type="entry name" value="Peptide chain release factor 1"/>
    <property type="match status" value="1"/>
</dbReference>
<dbReference type="FunFam" id="3.30.70.1660:FF:000002">
    <property type="entry name" value="Peptide chain release factor 1"/>
    <property type="match status" value="1"/>
</dbReference>
<dbReference type="FunFam" id="3.30.70.1660:FF:000004">
    <property type="entry name" value="Peptide chain release factor 1"/>
    <property type="match status" value="1"/>
</dbReference>
<dbReference type="Gene3D" id="3.30.160.20">
    <property type="match status" value="1"/>
</dbReference>
<dbReference type="Gene3D" id="3.30.70.1660">
    <property type="match status" value="2"/>
</dbReference>
<dbReference type="Gene3D" id="6.10.140.1950">
    <property type="match status" value="1"/>
</dbReference>
<dbReference type="HAMAP" id="MF_00093">
    <property type="entry name" value="Rel_fac_1"/>
    <property type="match status" value="1"/>
</dbReference>
<dbReference type="InterPro" id="IPR005139">
    <property type="entry name" value="PCRF"/>
</dbReference>
<dbReference type="InterPro" id="IPR000352">
    <property type="entry name" value="Pep_chain_release_fac_I"/>
</dbReference>
<dbReference type="InterPro" id="IPR045853">
    <property type="entry name" value="Pep_chain_release_fac_I_sf"/>
</dbReference>
<dbReference type="InterPro" id="IPR050057">
    <property type="entry name" value="Prokaryotic/Mito_RF"/>
</dbReference>
<dbReference type="InterPro" id="IPR004373">
    <property type="entry name" value="RF-1"/>
</dbReference>
<dbReference type="NCBIfam" id="TIGR00019">
    <property type="entry name" value="prfA"/>
    <property type="match status" value="1"/>
</dbReference>
<dbReference type="NCBIfam" id="NF001859">
    <property type="entry name" value="PRK00591.1"/>
    <property type="match status" value="1"/>
</dbReference>
<dbReference type="PANTHER" id="PTHR43804">
    <property type="entry name" value="LD18447P"/>
    <property type="match status" value="1"/>
</dbReference>
<dbReference type="PANTHER" id="PTHR43804:SF7">
    <property type="entry name" value="LD18447P"/>
    <property type="match status" value="1"/>
</dbReference>
<dbReference type="Pfam" id="PF03462">
    <property type="entry name" value="PCRF"/>
    <property type="match status" value="1"/>
</dbReference>
<dbReference type="Pfam" id="PF00472">
    <property type="entry name" value="RF-1"/>
    <property type="match status" value="1"/>
</dbReference>
<dbReference type="SMART" id="SM00937">
    <property type="entry name" value="PCRF"/>
    <property type="match status" value="1"/>
</dbReference>
<dbReference type="SUPFAM" id="SSF75620">
    <property type="entry name" value="Release factor"/>
    <property type="match status" value="1"/>
</dbReference>
<dbReference type="PROSITE" id="PS00745">
    <property type="entry name" value="RF_PROK_I"/>
    <property type="match status" value="1"/>
</dbReference>
<comment type="function">
    <text evidence="1">Peptide chain release factor 1 directs the termination of translation in response to the peptide chain termination codons UAG and UAA.</text>
</comment>
<comment type="subcellular location">
    <subcellularLocation>
        <location evidence="1">Cytoplasm</location>
    </subcellularLocation>
</comment>
<comment type="PTM">
    <text evidence="1">Methylated by PrmC. Methylation increases the termination efficiency of RF1.</text>
</comment>
<comment type="similarity">
    <text evidence="1">Belongs to the prokaryotic/mitochondrial release factor family.</text>
</comment>